<keyword id="KW-0489">Methyltransferase</keyword>
<keyword id="KW-1185">Reference proteome</keyword>
<keyword id="KW-0949">S-adenosyl-L-methionine</keyword>
<keyword id="KW-0808">Transferase</keyword>
<feature type="chain" id="PRO_0000399783" description="Alpha N-terminal protein methyltransferase 1">
    <location>
        <begin position="1"/>
        <end position="234"/>
    </location>
</feature>
<feature type="binding site" evidence="1">
    <location>
        <position position="71"/>
    </location>
    <ligand>
        <name>S-adenosyl-L-methionine</name>
        <dbReference type="ChEBI" id="CHEBI:59789"/>
    </ligand>
</feature>
<feature type="binding site" evidence="1">
    <location>
        <position position="76"/>
    </location>
    <ligand>
        <name>S-adenosyl-L-methionine</name>
        <dbReference type="ChEBI" id="CHEBI:59789"/>
    </ligand>
</feature>
<feature type="binding site" evidence="1">
    <location>
        <begin position="93"/>
        <end position="95"/>
    </location>
    <ligand>
        <name>S-adenosyl-L-methionine</name>
        <dbReference type="ChEBI" id="CHEBI:59789"/>
    </ligand>
</feature>
<feature type="binding site" evidence="1">
    <location>
        <begin position="120"/>
        <end position="121"/>
    </location>
    <ligand>
        <name>S-adenosyl-L-methionine</name>
        <dbReference type="ChEBI" id="CHEBI:59789"/>
    </ligand>
</feature>
<feature type="binding site" evidence="1">
    <location>
        <position position="136"/>
    </location>
    <ligand>
        <name>S-adenosyl-L-methionine</name>
        <dbReference type="ChEBI" id="CHEBI:59789"/>
    </ligand>
</feature>
<evidence type="ECO:0000250" key="1">
    <source>
        <dbReference type="UniProtKB" id="Q9BV86"/>
    </source>
</evidence>
<evidence type="ECO:0000269" key="2">
    <source>
    </source>
</evidence>
<evidence type="ECO:0000269" key="3">
    <source>
    </source>
</evidence>
<evidence type="ECO:0000305" key="4"/>
<evidence type="ECO:0000312" key="5">
    <source>
        <dbReference type="WormBase" id="Y74C9A.3"/>
    </source>
</evidence>
<sequence length="234" mass="26632">MSSSSSSRIHNGEDVYEKAEEYWSRASQDVNGMLGGFEALHAPDISASKRFIEGLKKKNLFGYFDYALDCGAGIGRVTKHLLMPFFSKVDMEDVVEELITKSDQYIGKHPRIGDKFVEGLQTFAPPERRYDLIWIQWVSGHLVDEDLVDFFKRCAKGLKPGGCIVLKDNVTNHEKRLFDDDDHSWTRTEPELLKAFADSQLDMVSKALQTGFPKEIYPVKMYALKPQHTGFTNN</sequence>
<gene>
    <name evidence="5" type="primary">homt-1</name>
    <name evidence="5" type="ORF">Y74C9A.3</name>
</gene>
<organism>
    <name type="scientific">Caenorhabditis elegans</name>
    <dbReference type="NCBI Taxonomy" id="6239"/>
    <lineage>
        <taxon>Eukaryota</taxon>
        <taxon>Metazoa</taxon>
        <taxon>Ecdysozoa</taxon>
        <taxon>Nematoda</taxon>
        <taxon>Chromadorea</taxon>
        <taxon>Rhabditida</taxon>
        <taxon>Rhabditina</taxon>
        <taxon>Rhabditomorpha</taxon>
        <taxon>Rhabditoidea</taxon>
        <taxon>Rhabditidae</taxon>
        <taxon>Peloderinae</taxon>
        <taxon>Caenorhabditis</taxon>
    </lineage>
</organism>
<dbReference type="EC" id="2.1.1.244" evidence="1"/>
<dbReference type="EMBL" id="FO080986">
    <property type="protein sequence ID" value="CCD68263.1"/>
    <property type="molecule type" value="Genomic_DNA"/>
</dbReference>
<dbReference type="RefSeq" id="NP_490660.1">
    <property type="nucleotide sequence ID" value="NM_058260.8"/>
</dbReference>
<dbReference type="SMR" id="Q9N4D9"/>
<dbReference type="BioGRID" id="37096">
    <property type="interactions" value="3"/>
</dbReference>
<dbReference type="FunCoup" id="Q9N4D9">
    <property type="interactions" value="1515"/>
</dbReference>
<dbReference type="STRING" id="6239.Y74C9A.3.1"/>
<dbReference type="PaxDb" id="6239-Y74C9A.3"/>
<dbReference type="PeptideAtlas" id="Q9N4D9"/>
<dbReference type="EnsemblMetazoa" id="Y74C9A.3.1">
    <property type="protein sequence ID" value="Y74C9A.3.1"/>
    <property type="gene ID" value="WBGene00022277"/>
</dbReference>
<dbReference type="GeneID" id="171590"/>
<dbReference type="KEGG" id="cel:CELE_Y74C9A.3"/>
<dbReference type="UCSC" id="Y74C9A.3.1">
    <property type="organism name" value="c. elegans"/>
</dbReference>
<dbReference type="AGR" id="WB:WBGene00022277"/>
<dbReference type="CTD" id="171590"/>
<dbReference type="WormBase" id="Y74C9A.3">
    <property type="protein sequence ID" value="CE28146"/>
    <property type="gene ID" value="WBGene00022277"/>
    <property type="gene designation" value="homt-1"/>
</dbReference>
<dbReference type="eggNOG" id="KOG3178">
    <property type="taxonomic scope" value="Eukaryota"/>
</dbReference>
<dbReference type="GeneTree" id="ENSGT00390000008371"/>
<dbReference type="HOGENOM" id="CLU_055356_3_1_1"/>
<dbReference type="InParanoid" id="Q9N4D9"/>
<dbReference type="OMA" id="PVRMYCL"/>
<dbReference type="OrthoDB" id="1298661at2759"/>
<dbReference type="PhylomeDB" id="Q9N4D9"/>
<dbReference type="PRO" id="PR:Q9N4D9"/>
<dbReference type="Proteomes" id="UP000001940">
    <property type="component" value="Chromosome I"/>
</dbReference>
<dbReference type="Bgee" id="WBGene00022277">
    <property type="expression patterns" value="Expressed in germ line (C elegans) and 4 other cell types or tissues"/>
</dbReference>
<dbReference type="GO" id="GO:0005737">
    <property type="term" value="C:cytoplasm"/>
    <property type="evidence" value="ECO:0000318"/>
    <property type="project" value="GO_Central"/>
</dbReference>
<dbReference type="GO" id="GO:0071885">
    <property type="term" value="F:N-terminal protein N-methyltransferase activity"/>
    <property type="evidence" value="ECO:0000318"/>
    <property type="project" value="GO_Central"/>
</dbReference>
<dbReference type="GO" id="GO:0032259">
    <property type="term" value="P:methylation"/>
    <property type="evidence" value="ECO:0007669"/>
    <property type="project" value="UniProtKB-KW"/>
</dbReference>
<dbReference type="CDD" id="cd02440">
    <property type="entry name" value="AdoMet_MTases"/>
    <property type="match status" value="1"/>
</dbReference>
<dbReference type="FunFam" id="3.40.50.150:FF:000025">
    <property type="entry name" value="N-terminal Xaa-Pro-Lys N-methyltransferase 1"/>
    <property type="match status" value="1"/>
</dbReference>
<dbReference type="Gene3D" id="3.40.50.150">
    <property type="entry name" value="Vaccinia Virus protein VP39"/>
    <property type="match status" value="1"/>
</dbReference>
<dbReference type="InterPro" id="IPR008576">
    <property type="entry name" value="MeTrfase_NTM1"/>
</dbReference>
<dbReference type="InterPro" id="IPR029063">
    <property type="entry name" value="SAM-dependent_MTases_sf"/>
</dbReference>
<dbReference type="PANTHER" id="PTHR12753">
    <property type="entry name" value="AD-003 - RELATED"/>
    <property type="match status" value="1"/>
</dbReference>
<dbReference type="PANTHER" id="PTHR12753:SF0">
    <property type="entry name" value="ALPHA N-TERMINAL PROTEIN METHYLTRANSFERASE 1"/>
    <property type="match status" value="1"/>
</dbReference>
<dbReference type="Pfam" id="PF05891">
    <property type="entry name" value="Methyltransf_PK"/>
    <property type="match status" value="1"/>
</dbReference>
<dbReference type="PIRSF" id="PIRSF016958">
    <property type="entry name" value="DUF858_MeTrfase_lik"/>
    <property type="match status" value="1"/>
</dbReference>
<dbReference type="SUPFAM" id="SSF53335">
    <property type="entry name" value="S-adenosyl-L-methionine-dependent methyltransferases"/>
    <property type="match status" value="1"/>
</dbReference>
<accession>Q9N4D9</accession>
<protein>
    <recommendedName>
        <fullName evidence="1">Alpha N-terminal protein methyltransferase 1</fullName>
        <ecNumber evidence="1">2.1.1.244</ecNumber>
    </recommendedName>
    <alternativeName>
        <fullName evidence="1">X-Pro-Lys N-terminal protein methyltransferase 1</fullName>
        <shortName evidence="1">NTM1</shortName>
    </alternativeName>
</protein>
<comment type="function">
    <text evidence="1 3">Alpha-N-methyltransferase that methylates the N-terminus of target proteins containing the N-terminal motif [Ala/Pro/Ser]-Pro-Lys when the initiator Met is cleaved. Specifically catalyzes mono-, di- or tri-methylation of exposed alpha-amino group of Ala or Ser residue in the [Ala/Ser]-Pro-Lys motif and mono- or di-methylation of Pro in the Pro-Pro-Lys motif (By similarity). Probably required for the synthesis of neurotransmitter melatonin from serotonin, which plays a role in promoting a sleep-like state, called lethargus, during larval development (PubMed:32958651).</text>
</comment>
<comment type="catalytic activity">
    <reaction evidence="1">
        <text>N-terminal L-alanyl-L-prolyl-L-lysyl-[protein] + 3 S-adenosyl-L-methionine = N-terminal N,N,N-trimethyl-L-alanyl-L-prolyl-L-lysyl-[protein] + 3 S-adenosyl-L-homocysteine + 3 H(+)</text>
        <dbReference type="Rhea" id="RHEA:54712"/>
        <dbReference type="Rhea" id="RHEA-COMP:13785"/>
        <dbReference type="Rhea" id="RHEA-COMP:13971"/>
        <dbReference type="ChEBI" id="CHEBI:15378"/>
        <dbReference type="ChEBI" id="CHEBI:57856"/>
        <dbReference type="ChEBI" id="CHEBI:59789"/>
        <dbReference type="ChEBI" id="CHEBI:138057"/>
        <dbReference type="ChEBI" id="CHEBI:138315"/>
        <dbReference type="EC" id="2.1.1.244"/>
    </reaction>
</comment>
<comment type="catalytic activity">
    <reaction evidence="1">
        <text>N-terminal L-seryl-L-prolyl-L-lysyl-[protein] + 3 S-adenosyl-L-methionine = N-terminal N,N,N-trimethyl-L-seryl-L-prolyl-L-lysyl-[protein] + 3 S-adenosyl-L-homocysteine + 3 H(+)</text>
        <dbReference type="Rhea" id="RHEA:54724"/>
        <dbReference type="Rhea" id="RHEA-COMP:13789"/>
        <dbReference type="Rhea" id="RHEA-COMP:13973"/>
        <dbReference type="ChEBI" id="CHEBI:15378"/>
        <dbReference type="ChEBI" id="CHEBI:57856"/>
        <dbReference type="ChEBI" id="CHEBI:59789"/>
        <dbReference type="ChEBI" id="CHEBI:138061"/>
        <dbReference type="ChEBI" id="CHEBI:138317"/>
        <dbReference type="EC" id="2.1.1.244"/>
    </reaction>
</comment>
<comment type="catalytic activity">
    <reaction evidence="1">
        <text>N-terminal L-prolyl-L-prolyl-L-lysyl-[protein] + 2 S-adenosyl-L-methionine = N-terminal N,N-dimethyl-L-prolyl-L-prolyl-L-lysyl-[protein] + 2 S-adenosyl-L-homocysteine + 2 H(+)</text>
        <dbReference type="Rhea" id="RHEA:54736"/>
        <dbReference type="Rhea" id="RHEA-COMP:13787"/>
        <dbReference type="Rhea" id="RHEA-COMP:13974"/>
        <dbReference type="ChEBI" id="CHEBI:15378"/>
        <dbReference type="ChEBI" id="CHEBI:57856"/>
        <dbReference type="ChEBI" id="CHEBI:59789"/>
        <dbReference type="ChEBI" id="CHEBI:138059"/>
        <dbReference type="ChEBI" id="CHEBI:138318"/>
        <dbReference type="EC" id="2.1.1.244"/>
    </reaction>
</comment>
<comment type="tissue specificity">
    <text evidence="2 3">Expressed in uterine cells and PVT neurons of the tail (PubMed:17573073, PubMed:32958651). Expressed in pharynx, intestine and DVB tail neuron (PubMed:32958651).</text>
</comment>
<comment type="disruption phenotype">
    <text evidence="3">Causes significant increase in synaptic transmission including 55% increase in amplitude of evoked postsynaptic currents and 102% increase in the frequency of miniature postsynaptic currents (PubMed:32958651). Decreases total and motionless sleep due to increase in the frequency of active events during sleep-like state (PubMed:32958651).</text>
</comment>
<comment type="similarity">
    <text evidence="4">Belongs to the methyltransferase superfamily. NTM1 family.</text>
</comment>
<name>NTM1_CAEEL</name>
<proteinExistence type="evidence at transcript level"/>
<reference key="1">
    <citation type="journal article" date="1998" name="Science">
        <title>Genome sequence of the nematode C. elegans: a platform for investigating biology.</title>
        <authorList>
            <consortium name="The C. elegans sequencing consortium"/>
        </authorList>
    </citation>
    <scope>NUCLEOTIDE SEQUENCE [LARGE SCALE GENOMIC DNA]</scope>
    <source>
        <strain>Bristol N2</strain>
    </source>
</reference>
<reference key="2">
    <citation type="journal article" date="2007" name="Neuropharmacology">
        <title>Melatonin signaling regulates locomotion behavior and homeostatic states through distinct receptor pathways in Caenorhabditis elegans.</title>
        <authorList>
            <person name="Tanaka D."/>
            <person name="Furusawa K."/>
            <person name="Kameyama K."/>
            <person name="Okamoto H."/>
            <person name="Doi M."/>
        </authorList>
    </citation>
    <scope>TISSUE SPECIFICITY</scope>
</reference>
<reference evidence="4" key="3">
    <citation type="journal article" date="2020" name="Proc. Natl. Acad. Sci. U.S.A.">
        <title>Melatonin promotes sleep by activating the BK channel in C. elegans.</title>
        <authorList>
            <person name="Niu L."/>
            <person name="Li Y."/>
            <person name="Zong P."/>
            <person name="Liu P."/>
            <person name="Shui Y."/>
            <person name="Chen B."/>
            <person name="Wang Z.W."/>
        </authorList>
    </citation>
    <scope>FUNCTION</scope>
    <scope>TISSUE SPECIFICITY</scope>
    <scope>DISRUPTION PHENOTYPE</scope>
</reference>